<gene>
    <name type="ORF">ORF2a</name>
</gene>
<protein>
    <recommendedName>
        <fullName>RNA-directed RNA polymerase 2a</fullName>
        <shortName>protein 2a</shortName>
        <ecNumber>2.7.7.48</ecNumber>
    </recommendedName>
</protein>
<feature type="chain" id="PRO_0000083279" description="RNA-directed RNA polymerase 2a">
    <location>
        <begin position="1"/>
        <end position="857"/>
    </location>
</feature>
<feature type="domain" description="RdRp catalytic" evidence="2">
    <location>
        <begin position="511"/>
        <end position="624"/>
    </location>
</feature>
<feature type="region of interest" description="Disordered" evidence="3">
    <location>
        <begin position="772"/>
        <end position="857"/>
    </location>
</feature>
<feature type="compositionally biased region" description="Basic and acidic residues" evidence="3">
    <location>
        <begin position="800"/>
        <end position="812"/>
    </location>
</feature>
<comment type="function">
    <text evidence="4">RNA-dependent RNA polymerase which replicates the viral genome composed of 3 RNA segments, RNA1, RNA2 and RNA3.</text>
</comment>
<comment type="catalytic activity">
    <reaction evidence="2">
        <text>RNA(n) + a ribonucleoside 5'-triphosphate = RNA(n+1) + diphosphate</text>
        <dbReference type="Rhea" id="RHEA:21248"/>
        <dbReference type="Rhea" id="RHEA-COMP:14527"/>
        <dbReference type="Rhea" id="RHEA-COMP:17342"/>
        <dbReference type="ChEBI" id="CHEBI:33019"/>
        <dbReference type="ChEBI" id="CHEBI:61557"/>
        <dbReference type="ChEBI" id="CHEBI:140395"/>
        <dbReference type="EC" id="2.7.7.48"/>
    </reaction>
</comment>
<comment type="subunit">
    <text evidence="1">Interacts with replication protein 1a.</text>
</comment>
<comment type="similarity">
    <text evidence="4">Belongs to the ssRNA positive-strand viruses RNA-directed RNA polymerase family.</text>
</comment>
<dbReference type="EC" id="2.7.7.48"/>
<dbReference type="EMBL" id="D28779">
    <property type="protein sequence ID" value="BAA21694.1"/>
    <property type="molecule type" value="Genomic_RNA"/>
</dbReference>
<dbReference type="Proteomes" id="UP000246397">
    <property type="component" value="Genome"/>
</dbReference>
<dbReference type="GO" id="GO:0000166">
    <property type="term" value="F:nucleotide binding"/>
    <property type="evidence" value="ECO:0007669"/>
    <property type="project" value="UniProtKB-KW"/>
</dbReference>
<dbReference type="GO" id="GO:0003723">
    <property type="term" value="F:RNA binding"/>
    <property type="evidence" value="ECO:0007669"/>
    <property type="project" value="InterPro"/>
</dbReference>
<dbReference type="GO" id="GO:0003968">
    <property type="term" value="F:RNA-directed RNA polymerase activity"/>
    <property type="evidence" value="ECO:0007669"/>
    <property type="project" value="UniProtKB-KW"/>
</dbReference>
<dbReference type="GO" id="GO:0006351">
    <property type="term" value="P:DNA-templated transcription"/>
    <property type="evidence" value="ECO:0007669"/>
    <property type="project" value="InterPro"/>
</dbReference>
<dbReference type="GO" id="GO:0039690">
    <property type="term" value="P:positive stranded viral RNA replication"/>
    <property type="evidence" value="ECO:0007669"/>
    <property type="project" value="InterPro"/>
</dbReference>
<dbReference type="CDD" id="cd23252">
    <property type="entry name" value="Bromoviridae_RdRp"/>
    <property type="match status" value="1"/>
</dbReference>
<dbReference type="InterPro" id="IPR047309">
    <property type="entry name" value="Bromoviridae_RdRp"/>
</dbReference>
<dbReference type="InterPro" id="IPR043502">
    <property type="entry name" value="DNA/RNA_pol_sf"/>
</dbReference>
<dbReference type="InterPro" id="IPR001788">
    <property type="entry name" value="RNA-dep_RNA_pol_alsuvir"/>
</dbReference>
<dbReference type="InterPro" id="IPR007094">
    <property type="entry name" value="RNA-dir_pol_PSvirus"/>
</dbReference>
<dbReference type="Pfam" id="PF00978">
    <property type="entry name" value="RdRP_2"/>
    <property type="match status" value="1"/>
</dbReference>
<dbReference type="SUPFAM" id="SSF56672">
    <property type="entry name" value="DNA/RNA polymerases"/>
    <property type="match status" value="1"/>
</dbReference>
<dbReference type="PROSITE" id="PS50507">
    <property type="entry name" value="RDRP_SSRNA_POS"/>
    <property type="match status" value="1"/>
</dbReference>
<evidence type="ECO:0000250" key="1"/>
<evidence type="ECO:0000255" key="2">
    <source>
        <dbReference type="PROSITE-ProRule" id="PRU00539"/>
    </source>
</evidence>
<evidence type="ECO:0000256" key="3">
    <source>
        <dbReference type="SAM" id="MobiDB-lite"/>
    </source>
</evidence>
<evidence type="ECO:0000305" key="4"/>
<sequence length="857" mass="96561">MAFSAPTFSLANLLNGSYGVDTPEEVERVRSEQREEAAAACRNYRPLPAVDVSESVTEDAHSLRTPDGAPSEEVSVEFVTYGAEDYLEKSDDELSVAFETMVKPMRIGQLWCPAFNKCSFISSIAMARALLLAPRTSHRTMKGFEDLVAAIYTKSDFYYDEECEADDIQIDVSSRDVPGYSFEPWSRTSGFEPPPICEACDMIMYQCPCFDFNALKKSCAERTFADDYVIEGLDGVVDNATLLSNLGPFLVPVKCQYEKCPTPTVAIPPSLNRATDRVDINLVQSICDSTLPTHSNYDDSFHQVFVESADYSIDLDHVRLRQSDLIAKIPDSGHMIPVLSTGSGHKRVGTTKEVLTAIKKRNADVPELGDSVNLSRLSKAVAERFFISYINGNSLASSNFVNVVSNFHDYMEKWKSSGLSYDDLPDLHAENLQFYDHMIKSDVKPVVSDTLNIDRPVPATITYHKKGITSQFSPLFTALFERFQRCLRERIILPVGKISSLEMAGFDVKNKHCLEIDLSKFDKSQGEFHLMIQEHILNGLGCPAPITKWWCDFHRFSYIRDRRAGVGMPISFQRRTGDAFTYFGNTIVTMAEFAWCYDTDQFEKLLFSGDDSLGFSVLPPVGDPSKFTTLFNMEAKVMEPAVPYICSKFLLSDEFGNTFSVPDPLREVQRLGTKKIPYSDNDEFLFAHFMSFVDRLKFLDRMTQSCIDQLSLFFELKYRKSGAEAALMLGAFKKYTANFQSYKELYYSDRRQCELINSFSCVELRIERSSSTKQRKKKDGIERRRSDKRRTPTGSYGGGEKTETKVSHEESTGTRSQKSQREGAFKSQIVPLPTILSGGWSGTDRAPPCEHGGIIRI</sequence>
<name>RDRP_CMVNT</name>
<organismHost>
    <name type="scientific">Cucumis sativus</name>
    <name type="common">Cucumber</name>
    <dbReference type="NCBI Taxonomy" id="3659"/>
</organismHost>
<organismHost>
    <name type="scientific">Solanum lycopersicum</name>
    <name type="common">Tomato</name>
    <name type="synonym">Lycopersicon esculentum</name>
    <dbReference type="NCBI Taxonomy" id="4081"/>
</organismHost>
<organismHost>
    <name type="scientific">Spinacia oleracea</name>
    <name type="common">Spinach</name>
    <dbReference type="NCBI Taxonomy" id="3562"/>
</organismHost>
<reference key="1">
    <citation type="journal article" date="1995" name="Arch. Virol.">
        <title>Complete genomic RNA sequences of cucumber mosaic virus strain NT9 from Taiwan.</title>
        <authorList>
            <person name="Hsu Y.-H."/>
            <person name="Wu C.W."/>
            <person name="Lin B.Y."/>
            <person name="Chen H.Y."/>
            <person name="Lee M.F."/>
            <person name="Tsai C.H."/>
        </authorList>
    </citation>
    <scope>NUCLEOTIDE SEQUENCE [GENOMIC RNA]</scope>
</reference>
<organism>
    <name type="scientific">Cucumber mosaic virus (strain NT9)</name>
    <name type="common">CMV</name>
    <dbReference type="NCBI Taxonomy" id="117124"/>
    <lineage>
        <taxon>Viruses</taxon>
        <taxon>Riboviria</taxon>
        <taxon>Orthornavirae</taxon>
        <taxon>Kitrinoviricota</taxon>
        <taxon>Alsuviricetes</taxon>
        <taxon>Martellivirales</taxon>
        <taxon>Bromoviridae</taxon>
        <taxon>Cucumovirus</taxon>
        <taxon>Cucumber mosaic virus</taxon>
    </lineage>
</organism>
<proteinExistence type="inferred from homology"/>
<keyword id="KW-0547">Nucleotide-binding</keyword>
<keyword id="KW-0548">Nucleotidyltransferase</keyword>
<keyword id="KW-0696">RNA-directed RNA polymerase</keyword>
<keyword id="KW-0808">Transferase</keyword>
<keyword id="KW-0693">Viral RNA replication</keyword>
<accession>O40977</accession>